<proteinExistence type="inferred from homology"/>
<organism>
    <name type="scientific">Cronobacter sakazakii (strain ATCC BAA-894)</name>
    <name type="common">Enterobacter sakazakii</name>
    <dbReference type="NCBI Taxonomy" id="290339"/>
    <lineage>
        <taxon>Bacteria</taxon>
        <taxon>Pseudomonadati</taxon>
        <taxon>Pseudomonadota</taxon>
        <taxon>Gammaproteobacteria</taxon>
        <taxon>Enterobacterales</taxon>
        <taxon>Enterobacteriaceae</taxon>
        <taxon>Cronobacter</taxon>
    </lineage>
</organism>
<reference key="1">
    <citation type="journal article" date="2010" name="PLoS ONE">
        <title>Genome sequence of Cronobacter sakazakii BAA-894 and comparative genomic hybridization analysis with other Cronobacter species.</title>
        <authorList>
            <person name="Kucerova E."/>
            <person name="Clifton S.W."/>
            <person name="Xia X.Q."/>
            <person name="Long F."/>
            <person name="Porwollik S."/>
            <person name="Fulton L."/>
            <person name="Fronick C."/>
            <person name="Minx P."/>
            <person name="Kyung K."/>
            <person name="Warren W."/>
            <person name="Fulton R."/>
            <person name="Feng D."/>
            <person name="Wollam A."/>
            <person name="Shah N."/>
            <person name="Bhonagiri V."/>
            <person name="Nash W.E."/>
            <person name="Hallsworth-Pepin K."/>
            <person name="Wilson R.K."/>
            <person name="McClelland M."/>
            <person name="Forsythe S.J."/>
        </authorList>
    </citation>
    <scope>NUCLEOTIDE SEQUENCE [LARGE SCALE GENOMIC DNA]</scope>
    <source>
        <strain>ATCC BAA-894</strain>
    </source>
</reference>
<gene>
    <name evidence="1" type="primary">entH</name>
    <name type="ordered locus">ESA_00800</name>
</gene>
<dbReference type="EC" id="3.1.2.-" evidence="1"/>
<dbReference type="EMBL" id="CP000783">
    <property type="protein sequence ID" value="ABU76077.1"/>
    <property type="molecule type" value="Genomic_DNA"/>
</dbReference>
<dbReference type="RefSeq" id="WP_012124082.1">
    <property type="nucleotide sequence ID" value="NC_009778.1"/>
</dbReference>
<dbReference type="SMR" id="A7MKY7"/>
<dbReference type="GeneID" id="45714633"/>
<dbReference type="KEGG" id="esa:ESA_00800"/>
<dbReference type="HOGENOM" id="CLU_089876_13_1_6"/>
<dbReference type="UniPathway" id="UPA00017"/>
<dbReference type="Proteomes" id="UP000000260">
    <property type="component" value="Chromosome"/>
</dbReference>
<dbReference type="GO" id="GO:0005829">
    <property type="term" value="C:cytosol"/>
    <property type="evidence" value="ECO:0007669"/>
    <property type="project" value="TreeGrafter"/>
</dbReference>
<dbReference type="GO" id="GO:0061522">
    <property type="term" value="F:1,4-dihydroxy-2-naphthoyl-CoA thioesterase activity"/>
    <property type="evidence" value="ECO:0007669"/>
    <property type="project" value="TreeGrafter"/>
</dbReference>
<dbReference type="GO" id="GO:0009239">
    <property type="term" value="P:enterobactin biosynthetic process"/>
    <property type="evidence" value="ECO:0007669"/>
    <property type="project" value="UniProtKB-UniRule"/>
</dbReference>
<dbReference type="CDD" id="cd03443">
    <property type="entry name" value="PaaI_thioesterase"/>
    <property type="match status" value="1"/>
</dbReference>
<dbReference type="FunFam" id="3.10.129.10:FF:000002">
    <property type="entry name" value="1,4-dihydroxy-2-naphthoyl-CoA hydrolase"/>
    <property type="match status" value="1"/>
</dbReference>
<dbReference type="Gene3D" id="3.10.129.10">
    <property type="entry name" value="Hotdog Thioesterase"/>
    <property type="match status" value="1"/>
</dbReference>
<dbReference type="HAMAP" id="MF_00907">
    <property type="entry name" value="Thioesterase_EntH"/>
    <property type="match status" value="1"/>
</dbReference>
<dbReference type="InterPro" id="IPR029069">
    <property type="entry name" value="HotDog_dom_sf"/>
</dbReference>
<dbReference type="InterPro" id="IPR003736">
    <property type="entry name" value="PAAI_dom"/>
</dbReference>
<dbReference type="InterPro" id="IPR026576">
    <property type="entry name" value="Thioesterase_EntH"/>
</dbReference>
<dbReference type="InterPro" id="IPR006683">
    <property type="entry name" value="Thioestr_dom"/>
</dbReference>
<dbReference type="NCBIfam" id="NF007607">
    <property type="entry name" value="PRK10254.1"/>
    <property type="match status" value="1"/>
</dbReference>
<dbReference type="NCBIfam" id="TIGR00369">
    <property type="entry name" value="unchar_dom_1"/>
    <property type="match status" value="1"/>
</dbReference>
<dbReference type="PANTHER" id="PTHR43240">
    <property type="entry name" value="1,4-DIHYDROXY-2-NAPHTHOYL-COA THIOESTERASE 1"/>
    <property type="match status" value="1"/>
</dbReference>
<dbReference type="PANTHER" id="PTHR43240:SF9">
    <property type="entry name" value="PROOFREADING THIOESTERASE ENTH"/>
    <property type="match status" value="1"/>
</dbReference>
<dbReference type="Pfam" id="PF03061">
    <property type="entry name" value="4HBT"/>
    <property type="match status" value="1"/>
</dbReference>
<dbReference type="SUPFAM" id="SSF54637">
    <property type="entry name" value="Thioesterase/thiol ester dehydrase-isomerase"/>
    <property type="match status" value="1"/>
</dbReference>
<protein>
    <recommendedName>
        <fullName evidence="1">Proofreading thioesterase EntH</fullName>
        <ecNumber evidence="1">3.1.2.-</ecNumber>
    </recommendedName>
    <alternativeName>
        <fullName evidence="1">Enterobactin synthase component H</fullName>
    </alternativeName>
</protein>
<name>ENTH_CROS8</name>
<comment type="function">
    <text evidence="1">Required for optimal enterobactin synthesis. Acts as a proofreading enzyme that prevents EntB misacylation by hydrolyzing the thioester bound existing between EntB and wrongly charged molecules.</text>
</comment>
<comment type="pathway">
    <text evidence="1">Siderophore biosynthesis; enterobactin biosynthesis.</text>
</comment>
<comment type="subunit">
    <text evidence="1">Homotetramer. Dimer of dimers. Interacts specifically with the aryl carrier protein (ArCP) domain of EntB.</text>
</comment>
<comment type="subcellular location">
    <subcellularLocation>
        <location evidence="1">Cytoplasm</location>
    </subcellularLocation>
</comment>
<comment type="similarity">
    <text evidence="1">Belongs to the thioesterase PaaI family.</text>
</comment>
<accession>A7MKY7</accession>
<evidence type="ECO:0000255" key="1">
    <source>
        <dbReference type="HAMAP-Rule" id="MF_00907"/>
    </source>
</evidence>
<feature type="chain" id="PRO_0000413867" description="Proofreading thioesterase EntH">
    <location>
        <begin position="1"/>
        <end position="137"/>
    </location>
</feature>
<feature type="active site" description="Nucleophile or proton acceptor" evidence="1">
    <location>
        <position position="63"/>
    </location>
</feature>
<keyword id="KW-0963">Cytoplasm</keyword>
<keyword id="KW-0378">Hydrolase</keyword>
<keyword id="KW-1185">Reference proteome</keyword>
<sequence>MIWKRHMTLEALNATSVGTMVEHLGIVYTRLGDDLLEATMPVDTRTHQPFGLLHGGASAALAETLGSMAGYLTTRDGQCVVGTEISASHHRAVSQGQVRGVCQPLHLGRQSQCWEIVIYDEQGRRCCTSRLSTAILG</sequence>